<evidence type="ECO:0000250" key="1">
    <source>
        <dbReference type="UniProtKB" id="P41855"/>
    </source>
</evidence>
<evidence type="ECO:0000250" key="2">
    <source>
        <dbReference type="UniProtKB" id="P41860"/>
    </source>
</evidence>
<evidence type="ECO:0000255" key="3"/>
<evidence type="ECO:0000269" key="4">
    <source>
    </source>
</evidence>
<evidence type="ECO:0000303" key="5">
    <source>
    </source>
</evidence>
<evidence type="ECO:0000305" key="6"/>
<organism>
    <name type="scientific">Delia radicum</name>
    <name type="common">Cabbage root fly</name>
    <name type="synonym">Anthomyia brassicae</name>
    <dbReference type="NCBI Taxonomy" id="30064"/>
    <lineage>
        <taxon>Eukaryota</taxon>
        <taxon>Metazoa</taxon>
        <taxon>Ecdysozoa</taxon>
        <taxon>Arthropoda</taxon>
        <taxon>Hexapoda</taxon>
        <taxon>Insecta</taxon>
        <taxon>Pterygota</taxon>
        <taxon>Neoptera</taxon>
        <taxon>Endopterygota</taxon>
        <taxon>Diptera</taxon>
        <taxon>Brachycera</taxon>
        <taxon>Muscomorpha</taxon>
        <taxon>Muscoidea</taxon>
        <taxon>Anthomyiidae</taxon>
        <taxon>Anthomyiinae</taxon>
        <taxon>Delia</taxon>
    </lineage>
</organism>
<reference evidence="6" key="1">
    <citation type="journal article" date="2012" name="PLoS ONE">
        <title>Peptidomics of the agriculturally damaging larval stage of the cabbage root fly Delia radicum (Diptera: Anthomyiidae).</title>
        <authorList>
            <person name="Zoephel J."/>
            <person name="Reiher W."/>
            <person name="Rexer K.-H."/>
            <person name="Kahnt J."/>
            <person name="Wegener C."/>
        </authorList>
    </citation>
    <scope>PROTEIN SEQUENCE</scope>
    <scope>TISSUE SPECIFICITY</scope>
    <scope>DEVELOPMENTAL STAGE</scope>
    <scope>MASS SPECTROMETRY</scope>
    <scope>AMIDATION AT PHE-10</scope>
    <source>
        <tissue evidence="4">CNS</tissue>
    </source>
</reference>
<comment type="function">
    <text evidence="1">FMRFamides and FMRFamide-like peptides are neuropeptides.</text>
</comment>
<comment type="subcellular location">
    <subcellularLocation>
        <location evidence="2">Secreted</location>
    </subcellularLocation>
</comment>
<comment type="tissue specificity">
    <text evidence="4">Expressed in the CNS and thoracic perisympathetic organs (tPSO) but not in the ring gland, midgut or abdominal perisympathetic organs (aPSO) (at protein level).</text>
</comment>
<comment type="developmental stage">
    <text evidence="4">Detected in larvae.</text>
</comment>
<comment type="mass spectrometry"/>
<comment type="similarity">
    <text evidence="3">Belongs to the FARP (FMRFamide related peptide) family.</text>
</comment>
<proteinExistence type="evidence at protein level"/>
<feature type="peptide" id="PRO_0000419708" description="FMRFamide-like neuropeptide SAPGQDFMRF-amide" evidence="4">
    <location>
        <begin position="1"/>
        <end position="10"/>
    </location>
</feature>
<feature type="modified residue" description="Phenylalanine amide" evidence="4">
    <location>
        <position position="10"/>
    </location>
</feature>
<name>FAR8_DELRA</name>
<sequence>SAPGQDFMRF</sequence>
<accession>B3EWK4</accession>
<dbReference type="GO" id="GO:0005576">
    <property type="term" value="C:extracellular region"/>
    <property type="evidence" value="ECO:0007669"/>
    <property type="project" value="UniProtKB-SubCell"/>
</dbReference>
<dbReference type="GO" id="GO:0007218">
    <property type="term" value="P:neuropeptide signaling pathway"/>
    <property type="evidence" value="ECO:0007669"/>
    <property type="project" value="UniProtKB-KW"/>
</dbReference>
<keyword id="KW-0027">Amidation</keyword>
<keyword id="KW-0903">Direct protein sequencing</keyword>
<keyword id="KW-0527">Neuropeptide</keyword>
<keyword id="KW-0964">Secreted</keyword>
<protein>
    <recommendedName>
        <fullName evidence="5">FMRFamide-like neuropeptide SAPGQDFMRF-amide</fullName>
    </recommendedName>
</protein>